<evidence type="ECO:0000250" key="1"/>
<evidence type="ECO:0000305" key="2"/>
<feature type="chain" id="PRO_0000072830" description="Glycine--tRNA ligase alpha subunit">
    <location>
        <begin position="1"/>
        <end position="312"/>
    </location>
</feature>
<protein>
    <recommendedName>
        <fullName>Glycine--tRNA ligase alpha subunit</fullName>
        <ecNumber>6.1.1.14</ecNumber>
    </recommendedName>
    <alternativeName>
        <fullName>Glycyl-tRNA synthetase alpha subunit</fullName>
        <shortName>GlyRS</shortName>
    </alternativeName>
</protein>
<proteinExistence type="inferred from homology"/>
<name>SYGA_BUCAI</name>
<dbReference type="EC" id="6.1.1.14"/>
<dbReference type="EMBL" id="BA000003">
    <property type="protein sequence ID" value="BAB12854.1"/>
    <property type="status" value="ALT_INIT"/>
    <property type="molecule type" value="Genomic_DNA"/>
</dbReference>
<dbReference type="RefSeq" id="NP_239968.2">
    <property type="nucleotide sequence ID" value="NC_002528.1"/>
</dbReference>
<dbReference type="RefSeq" id="WP_009874092.1">
    <property type="nucleotide sequence ID" value="NZ_AP036055.1"/>
</dbReference>
<dbReference type="SMR" id="P57236"/>
<dbReference type="STRING" id="563178.BUAP5A_134"/>
<dbReference type="EnsemblBacteria" id="BAB12854">
    <property type="protein sequence ID" value="BAB12854"/>
    <property type="gene ID" value="BAB12854"/>
</dbReference>
<dbReference type="KEGG" id="buc:BU136"/>
<dbReference type="PATRIC" id="fig|107806.10.peg.145"/>
<dbReference type="eggNOG" id="COG0752">
    <property type="taxonomic scope" value="Bacteria"/>
</dbReference>
<dbReference type="HOGENOM" id="CLU_057066_1_0_6"/>
<dbReference type="Proteomes" id="UP000001806">
    <property type="component" value="Chromosome"/>
</dbReference>
<dbReference type="GO" id="GO:0005829">
    <property type="term" value="C:cytosol"/>
    <property type="evidence" value="ECO:0007669"/>
    <property type="project" value="TreeGrafter"/>
</dbReference>
<dbReference type="GO" id="GO:0005524">
    <property type="term" value="F:ATP binding"/>
    <property type="evidence" value="ECO:0007669"/>
    <property type="project" value="UniProtKB-UniRule"/>
</dbReference>
<dbReference type="GO" id="GO:0004820">
    <property type="term" value="F:glycine-tRNA ligase activity"/>
    <property type="evidence" value="ECO:0007669"/>
    <property type="project" value="UniProtKB-UniRule"/>
</dbReference>
<dbReference type="GO" id="GO:0006426">
    <property type="term" value="P:glycyl-tRNA aminoacylation"/>
    <property type="evidence" value="ECO:0007669"/>
    <property type="project" value="UniProtKB-UniRule"/>
</dbReference>
<dbReference type="FunFam" id="3.30.930.10:FF:000006">
    <property type="entry name" value="Glycine--tRNA ligase alpha subunit"/>
    <property type="match status" value="1"/>
</dbReference>
<dbReference type="Gene3D" id="3.30.930.10">
    <property type="entry name" value="Bira Bifunctional Protein, Domain 2"/>
    <property type="match status" value="1"/>
</dbReference>
<dbReference type="Gene3D" id="1.20.58.180">
    <property type="entry name" value="Class II aaRS and biotin synthetases, domain 2"/>
    <property type="match status" value="1"/>
</dbReference>
<dbReference type="HAMAP" id="MF_00254">
    <property type="entry name" value="Gly_tRNA_synth_alpha"/>
    <property type="match status" value="1"/>
</dbReference>
<dbReference type="InterPro" id="IPR045864">
    <property type="entry name" value="aa-tRNA-synth_II/BPL/LPL"/>
</dbReference>
<dbReference type="InterPro" id="IPR006194">
    <property type="entry name" value="Gly-tRNA-synth_heterodimer"/>
</dbReference>
<dbReference type="InterPro" id="IPR002310">
    <property type="entry name" value="Gly-tRNA_ligase_asu"/>
</dbReference>
<dbReference type="NCBIfam" id="TIGR00388">
    <property type="entry name" value="glyQ"/>
    <property type="match status" value="1"/>
</dbReference>
<dbReference type="NCBIfam" id="NF006827">
    <property type="entry name" value="PRK09348.1"/>
    <property type="match status" value="1"/>
</dbReference>
<dbReference type="PANTHER" id="PTHR30075:SF2">
    <property type="entry name" value="GLYCINE--TRNA LIGASE, CHLOROPLASTIC_MITOCHONDRIAL 2"/>
    <property type="match status" value="1"/>
</dbReference>
<dbReference type="PANTHER" id="PTHR30075">
    <property type="entry name" value="GLYCYL-TRNA SYNTHETASE"/>
    <property type="match status" value="1"/>
</dbReference>
<dbReference type="Pfam" id="PF02091">
    <property type="entry name" value="tRNA-synt_2e"/>
    <property type="match status" value="1"/>
</dbReference>
<dbReference type="PRINTS" id="PR01044">
    <property type="entry name" value="TRNASYNTHGA"/>
</dbReference>
<dbReference type="SUPFAM" id="SSF55681">
    <property type="entry name" value="Class II aaRS and biotin synthetases"/>
    <property type="match status" value="1"/>
</dbReference>
<dbReference type="PROSITE" id="PS50861">
    <property type="entry name" value="AA_TRNA_LIGASE_II_GLYAB"/>
    <property type="match status" value="1"/>
</dbReference>
<gene>
    <name type="primary">glyQ</name>
    <name type="ordered locus">BU136</name>
</gene>
<keyword id="KW-0030">Aminoacyl-tRNA synthetase</keyword>
<keyword id="KW-0067">ATP-binding</keyword>
<keyword id="KW-0963">Cytoplasm</keyword>
<keyword id="KW-0436">Ligase</keyword>
<keyword id="KW-0547">Nucleotide-binding</keyword>
<keyword id="KW-0648">Protein biosynthesis</keyword>
<keyword id="KW-1185">Reference proteome</keyword>
<accession>P57236</accession>
<comment type="catalytic activity">
    <reaction>
        <text>tRNA(Gly) + glycine + ATP = glycyl-tRNA(Gly) + AMP + diphosphate</text>
        <dbReference type="Rhea" id="RHEA:16013"/>
        <dbReference type="Rhea" id="RHEA-COMP:9664"/>
        <dbReference type="Rhea" id="RHEA-COMP:9683"/>
        <dbReference type="ChEBI" id="CHEBI:30616"/>
        <dbReference type="ChEBI" id="CHEBI:33019"/>
        <dbReference type="ChEBI" id="CHEBI:57305"/>
        <dbReference type="ChEBI" id="CHEBI:78442"/>
        <dbReference type="ChEBI" id="CHEBI:78522"/>
        <dbReference type="ChEBI" id="CHEBI:456215"/>
        <dbReference type="EC" id="6.1.1.14"/>
    </reaction>
</comment>
<comment type="subunit">
    <text evidence="1">Tetramer of two alpha and two beta subunits.</text>
</comment>
<comment type="subcellular location">
    <subcellularLocation>
        <location evidence="1">Cytoplasm</location>
    </subcellularLocation>
</comment>
<comment type="similarity">
    <text evidence="2">Belongs to the class-II aminoacyl-tRNA synthetase family.</text>
</comment>
<comment type="sequence caution" evidence="2">
    <conflict type="erroneous initiation">
        <sequence resource="EMBL-CDS" id="BAB12854"/>
    </conflict>
</comment>
<reference key="1">
    <citation type="journal article" date="2000" name="Nature">
        <title>Genome sequence of the endocellular bacterial symbiont of aphids Buchnera sp. APS.</title>
        <authorList>
            <person name="Shigenobu S."/>
            <person name="Watanabe H."/>
            <person name="Hattori M."/>
            <person name="Sakaki Y."/>
            <person name="Ishikawa H."/>
        </authorList>
    </citation>
    <scope>NUCLEOTIDE SEQUENCE [LARGE SCALE GENOMIC DNA]</scope>
    <source>
        <strain>APS</strain>
    </source>
</reference>
<sequence>MKNYHNNFHKLITILQEYWLQQGCTIFQPLDLPIGAGTFHNITFLGTIGPEPINAAYIQSCRRPSDGRYGENPNRLQHYYQFQVIIKPPPNNIQNIYLNSLYLLNIDEKIHDIRFVEDNWENPTLGAWGIGWEVWLNGMEITQFTYFQQVGGLECKPVSVEITYGLERIAMHMQNKSNVYDLIWNEYNHKKITYGDIFQQNEREQSQYNFQYSDVNFLFDCFKKYELEAKKLINLKEPLLLVSYEKILQANHIFNLLDARKSLSSNERQSYILRIRKLTSQVAIKYLNLRKNLGFPLCHKKREIHDKENIIN</sequence>
<organism>
    <name type="scientific">Buchnera aphidicola subsp. Acyrthosiphon pisum (strain APS)</name>
    <name type="common">Acyrthosiphon pisum symbiotic bacterium</name>
    <dbReference type="NCBI Taxonomy" id="107806"/>
    <lineage>
        <taxon>Bacteria</taxon>
        <taxon>Pseudomonadati</taxon>
        <taxon>Pseudomonadota</taxon>
        <taxon>Gammaproteobacteria</taxon>
        <taxon>Enterobacterales</taxon>
        <taxon>Erwiniaceae</taxon>
        <taxon>Buchnera</taxon>
    </lineage>
</organism>